<name>LGT_FERNB</name>
<keyword id="KW-0997">Cell inner membrane</keyword>
<keyword id="KW-1003">Cell membrane</keyword>
<keyword id="KW-0472">Membrane</keyword>
<keyword id="KW-1185">Reference proteome</keyword>
<keyword id="KW-0808">Transferase</keyword>
<keyword id="KW-0812">Transmembrane</keyword>
<keyword id="KW-1133">Transmembrane helix</keyword>
<organism>
    <name type="scientific">Fervidobacterium nodosum (strain ATCC 35602 / DSM 5306 / Rt17-B1)</name>
    <dbReference type="NCBI Taxonomy" id="381764"/>
    <lineage>
        <taxon>Bacteria</taxon>
        <taxon>Thermotogati</taxon>
        <taxon>Thermotogota</taxon>
        <taxon>Thermotogae</taxon>
        <taxon>Thermotogales</taxon>
        <taxon>Fervidobacteriaceae</taxon>
        <taxon>Fervidobacterium</taxon>
    </lineage>
</organism>
<sequence>MSKSKRIILSVVIILAVGIGLFFFLREVFSGRLIVRDYIFQIGKFQLRWYSICIASGILVAYVLARRRLSMYPIKPEDLDEGLFWGIVAGILGARIYYVIFNWNYYSKYPSEIYKIWHGGLAIHGGIFGALLMIFIYSKIKGYFKFVHATDLFTSVLPLAQAIGRWGNFFNYEAYGRPTTLPWKMYVPPERRMPGFDIDRFFHPTFLYESLWDITIFVFLYFFVEKRKREYGETTALYLILYSLGRFWIESLRLDSLMAGHFRAAQVVSIILIFIGAAWYAYIIGKTGKRDN</sequence>
<proteinExistence type="inferred from homology"/>
<reference key="1">
    <citation type="submission" date="2007-07" db="EMBL/GenBank/DDBJ databases">
        <title>Complete sequence of Fervidobacterium nodosum Rt17-B1.</title>
        <authorList>
            <consortium name="US DOE Joint Genome Institute"/>
            <person name="Copeland A."/>
            <person name="Lucas S."/>
            <person name="Lapidus A."/>
            <person name="Barry K."/>
            <person name="Glavina del Rio T."/>
            <person name="Dalin E."/>
            <person name="Tice H."/>
            <person name="Pitluck S."/>
            <person name="Saunders E."/>
            <person name="Brettin T."/>
            <person name="Bruce D."/>
            <person name="Detter J.C."/>
            <person name="Han C."/>
            <person name="Schmutz J."/>
            <person name="Larimer F."/>
            <person name="Land M."/>
            <person name="Hauser L."/>
            <person name="Kyrpides N."/>
            <person name="Mikhailova N."/>
            <person name="Nelson K."/>
            <person name="Gogarten J.P."/>
            <person name="Noll K."/>
            <person name="Richardson P."/>
        </authorList>
    </citation>
    <scope>NUCLEOTIDE SEQUENCE [LARGE SCALE GENOMIC DNA]</scope>
    <source>
        <strain>ATCC 35602 / DSM 5306 / Rt17-B1</strain>
    </source>
</reference>
<accession>A7HLH6</accession>
<evidence type="ECO:0000255" key="1">
    <source>
        <dbReference type="HAMAP-Rule" id="MF_01147"/>
    </source>
</evidence>
<gene>
    <name evidence="1" type="primary">lgt</name>
    <name type="ordered locus">Fnod_0909</name>
</gene>
<protein>
    <recommendedName>
        <fullName evidence="1">Phosphatidylglycerol--prolipoprotein diacylglyceryl transferase</fullName>
        <ecNumber evidence="1">2.5.1.145</ecNumber>
    </recommendedName>
</protein>
<dbReference type="EC" id="2.5.1.145" evidence="1"/>
<dbReference type="EMBL" id="CP000771">
    <property type="protein sequence ID" value="ABS60759.1"/>
    <property type="molecule type" value="Genomic_DNA"/>
</dbReference>
<dbReference type="RefSeq" id="WP_011994074.1">
    <property type="nucleotide sequence ID" value="NC_009718.1"/>
</dbReference>
<dbReference type="SMR" id="A7HLH6"/>
<dbReference type="STRING" id="381764.Fnod_0909"/>
<dbReference type="KEGG" id="fno:Fnod_0909"/>
<dbReference type="eggNOG" id="COG0682">
    <property type="taxonomic scope" value="Bacteria"/>
</dbReference>
<dbReference type="HOGENOM" id="CLU_013386_1_2_0"/>
<dbReference type="OrthoDB" id="871140at2"/>
<dbReference type="UniPathway" id="UPA00664"/>
<dbReference type="Proteomes" id="UP000002415">
    <property type="component" value="Chromosome"/>
</dbReference>
<dbReference type="GO" id="GO:0005886">
    <property type="term" value="C:plasma membrane"/>
    <property type="evidence" value="ECO:0007669"/>
    <property type="project" value="UniProtKB-SubCell"/>
</dbReference>
<dbReference type="GO" id="GO:0008961">
    <property type="term" value="F:phosphatidylglycerol-prolipoprotein diacylglyceryl transferase activity"/>
    <property type="evidence" value="ECO:0007669"/>
    <property type="project" value="UniProtKB-UniRule"/>
</dbReference>
<dbReference type="GO" id="GO:0042158">
    <property type="term" value="P:lipoprotein biosynthetic process"/>
    <property type="evidence" value="ECO:0007669"/>
    <property type="project" value="UniProtKB-UniRule"/>
</dbReference>
<dbReference type="HAMAP" id="MF_01147">
    <property type="entry name" value="Lgt"/>
    <property type="match status" value="1"/>
</dbReference>
<dbReference type="InterPro" id="IPR001640">
    <property type="entry name" value="Lgt"/>
</dbReference>
<dbReference type="NCBIfam" id="TIGR00544">
    <property type="entry name" value="lgt"/>
    <property type="match status" value="1"/>
</dbReference>
<dbReference type="PANTHER" id="PTHR30589:SF0">
    <property type="entry name" value="PHOSPHATIDYLGLYCEROL--PROLIPOPROTEIN DIACYLGLYCERYL TRANSFERASE"/>
    <property type="match status" value="1"/>
</dbReference>
<dbReference type="PANTHER" id="PTHR30589">
    <property type="entry name" value="PROLIPOPROTEIN DIACYLGLYCERYL TRANSFERASE"/>
    <property type="match status" value="1"/>
</dbReference>
<dbReference type="Pfam" id="PF01790">
    <property type="entry name" value="LGT"/>
    <property type="match status" value="1"/>
</dbReference>
<dbReference type="PROSITE" id="PS01311">
    <property type="entry name" value="LGT"/>
    <property type="match status" value="1"/>
</dbReference>
<comment type="function">
    <text evidence="1">Catalyzes the transfer of the diacylglyceryl group from phosphatidylglycerol to the sulfhydryl group of the N-terminal cysteine of a prolipoprotein, the first step in the formation of mature lipoproteins.</text>
</comment>
<comment type="catalytic activity">
    <reaction evidence="1">
        <text>L-cysteinyl-[prolipoprotein] + a 1,2-diacyl-sn-glycero-3-phospho-(1'-sn-glycerol) = an S-1,2-diacyl-sn-glyceryl-L-cysteinyl-[prolipoprotein] + sn-glycerol 1-phosphate + H(+)</text>
        <dbReference type="Rhea" id="RHEA:56712"/>
        <dbReference type="Rhea" id="RHEA-COMP:14679"/>
        <dbReference type="Rhea" id="RHEA-COMP:14680"/>
        <dbReference type="ChEBI" id="CHEBI:15378"/>
        <dbReference type="ChEBI" id="CHEBI:29950"/>
        <dbReference type="ChEBI" id="CHEBI:57685"/>
        <dbReference type="ChEBI" id="CHEBI:64716"/>
        <dbReference type="ChEBI" id="CHEBI:140658"/>
        <dbReference type="EC" id="2.5.1.145"/>
    </reaction>
</comment>
<comment type="pathway">
    <text evidence="1">Protein modification; lipoprotein biosynthesis (diacylglyceryl transfer).</text>
</comment>
<comment type="subcellular location">
    <subcellularLocation>
        <location evidence="1">Cell inner membrane</location>
        <topology evidence="1">Multi-pass membrane protein</topology>
    </subcellularLocation>
</comment>
<comment type="similarity">
    <text evidence="1">Belongs to the Lgt family.</text>
</comment>
<feature type="chain" id="PRO_1000073055" description="Phosphatidylglycerol--prolipoprotein diacylglyceryl transferase">
    <location>
        <begin position="1"/>
        <end position="292"/>
    </location>
</feature>
<feature type="transmembrane region" description="Helical" evidence="1">
    <location>
        <begin position="7"/>
        <end position="27"/>
    </location>
</feature>
<feature type="transmembrane region" description="Helical" evidence="1">
    <location>
        <begin position="45"/>
        <end position="65"/>
    </location>
</feature>
<feature type="transmembrane region" description="Helical" evidence="1">
    <location>
        <begin position="83"/>
        <end position="103"/>
    </location>
</feature>
<feature type="transmembrane region" description="Helical" evidence="1">
    <location>
        <begin position="116"/>
        <end position="136"/>
    </location>
</feature>
<feature type="transmembrane region" description="Helical" evidence="1">
    <location>
        <begin position="204"/>
        <end position="224"/>
    </location>
</feature>
<feature type="transmembrane region" description="Helical" evidence="1">
    <location>
        <begin position="264"/>
        <end position="284"/>
    </location>
</feature>
<feature type="binding site" evidence="1">
    <location>
        <position position="165"/>
    </location>
    <ligand>
        <name>a 1,2-diacyl-sn-glycero-3-phospho-(1'-sn-glycerol)</name>
        <dbReference type="ChEBI" id="CHEBI:64716"/>
    </ligand>
</feature>